<gene>
    <name type="primary">OST4B</name>
    <name type="ordered locus">Os03g0392050</name>
</gene>
<evidence type="ECO:0000250" key="1"/>
<evidence type="ECO:0000250" key="2">
    <source>
        <dbReference type="UniProtKB" id="Q99380"/>
    </source>
</evidence>
<evidence type="ECO:0000255" key="3"/>
<evidence type="ECO:0000305" key="4"/>
<comment type="function">
    <text evidence="2">Subunit of the oligosaccharyl transferase (OST) complex that catalyzes the initial transfer of a defined glycan (Glc(3)Man(9)GlcNAc(2) in eukaryotes) from the lipid carrier dolichol-pyrophosphate to an asparagine residue within an Asn-X-Ser/Thr consensus motif in nascent polypeptide chains, the first step in protein N-glycosylation. N-glycosylation occurs cotranslationally and the complex associates with the Sec61 complex at the channel-forming translocon complex that mediates protein translocation across the endoplasmic reticulum (ER). All subunits are required for a maximal enzyme activity.</text>
</comment>
<comment type="subunit">
    <text evidence="2">Component of the oligosaccharyltransferase (OST) complex.</text>
</comment>
<comment type="subcellular location">
    <subcellularLocation>
        <location evidence="1">Endoplasmic reticulum membrane</location>
        <topology evidence="1">Single-pass type III membrane protein</topology>
    </subcellularLocation>
</comment>
<comment type="similarity">
    <text evidence="4">Belongs to the OST4 family.</text>
</comment>
<comment type="sequence caution" evidence="4">
    <conflict type="erroneous initiation">
        <sequence resource="EMBL-CDS" id="BAH92182"/>
    </conflict>
    <text>Extended N-terminus.</text>
</comment>
<reference key="1">
    <citation type="journal article" date="2005" name="Nature">
        <title>The map-based sequence of the rice genome.</title>
        <authorList>
            <consortium name="International rice genome sequencing project (IRGSP)"/>
        </authorList>
    </citation>
    <scope>NUCLEOTIDE SEQUENCE [LARGE SCALE GENOMIC DNA]</scope>
    <source>
        <strain>cv. Nipponbare</strain>
    </source>
</reference>
<reference key="2">
    <citation type="journal article" date="2008" name="Nucleic Acids Res.">
        <title>The rice annotation project database (RAP-DB): 2008 update.</title>
        <authorList>
            <consortium name="The rice annotation project (RAP)"/>
        </authorList>
    </citation>
    <scope>GENOME REANNOTATION</scope>
    <source>
        <strain>cv. Nipponbare</strain>
    </source>
</reference>
<reference key="3">
    <citation type="journal article" date="2013" name="Rice">
        <title>Improvement of the Oryza sativa Nipponbare reference genome using next generation sequence and optical map data.</title>
        <authorList>
            <person name="Kawahara Y."/>
            <person name="de la Bastide M."/>
            <person name="Hamilton J.P."/>
            <person name="Kanamori H."/>
            <person name="McCombie W.R."/>
            <person name="Ouyang S."/>
            <person name="Schwartz D.C."/>
            <person name="Tanaka T."/>
            <person name="Wu J."/>
            <person name="Zhou S."/>
            <person name="Childs K.L."/>
            <person name="Davidson R.M."/>
            <person name="Lin H."/>
            <person name="Quesada-Ocampo L."/>
            <person name="Vaillancourt B."/>
            <person name="Sakai H."/>
            <person name="Lee S.S."/>
            <person name="Kim J."/>
            <person name="Numa H."/>
            <person name="Itoh T."/>
            <person name="Buell C.R."/>
            <person name="Matsumoto T."/>
        </authorList>
    </citation>
    <scope>GENOME REANNOTATION</scope>
    <source>
        <strain>cv. Nipponbare</strain>
    </source>
</reference>
<reference key="4">
    <citation type="submission" date="2006-10" db="EMBL/GenBank/DDBJ databases">
        <title>Oryza sativa full length cDNA.</title>
        <authorList>
            <consortium name="The rice full-length cDNA consortium"/>
        </authorList>
    </citation>
    <scope>NUCLEOTIDE SEQUENCE [LARGE SCALE MRNA]</scope>
    <source>
        <strain>cv. Nipponbare</strain>
    </source>
</reference>
<dbReference type="EMBL" id="AP008209">
    <property type="protein sequence ID" value="BAH92182.1"/>
    <property type="status" value="ALT_INIT"/>
    <property type="molecule type" value="Genomic_DNA"/>
</dbReference>
<dbReference type="EMBL" id="AP014959">
    <property type="status" value="NOT_ANNOTATED_CDS"/>
    <property type="molecule type" value="Genomic_DNA"/>
</dbReference>
<dbReference type="EMBL" id="AK241316">
    <property type="status" value="NOT_ANNOTATED_CDS"/>
    <property type="molecule type" value="mRNA"/>
</dbReference>
<dbReference type="RefSeq" id="XP_015628918.1">
    <property type="nucleotide sequence ID" value="XM_015773432.1"/>
</dbReference>
<dbReference type="SMR" id="C7J0R5"/>
<dbReference type="STRING" id="39947.C7J0R5"/>
<dbReference type="PaxDb" id="39947-C7J0R5"/>
<dbReference type="KEGG" id="dosa:Os03g0392050"/>
<dbReference type="HOGENOM" id="CLU_186352_1_1_1"/>
<dbReference type="InParanoid" id="C7J0R5"/>
<dbReference type="OrthoDB" id="2124077at2759"/>
<dbReference type="Proteomes" id="UP000000763">
    <property type="component" value="Chromosome 3"/>
</dbReference>
<dbReference type="Proteomes" id="UP000059680">
    <property type="component" value="Chromosome 3"/>
</dbReference>
<dbReference type="GO" id="GO:0005789">
    <property type="term" value="C:endoplasmic reticulum membrane"/>
    <property type="evidence" value="ECO:0007669"/>
    <property type="project" value="UniProtKB-SubCell"/>
</dbReference>
<dbReference type="InterPro" id="IPR018943">
    <property type="entry name" value="Oligosaccaryltransferase"/>
</dbReference>
<dbReference type="InterPro" id="IPR044165">
    <property type="entry name" value="OST4_plant"/>
</dbReference>
<dbReference type="InterPro" id="IPR036330">
    <property type="entry name" value="Ost4p_sf"/>
</dbReference>
<dbReference type="PANTHER" id="PTHR28677">
    <property type="entry name" value="DOLICHYL-DIPHOSPHOOLIGOSACCHARIDE--PROTEIN GLYCOSYLTRANSFERASE SUBUNIT 4A-RELATED"/>
    <property type="match status" value="1"/>
</dbReference>
<dbReference type="PANTHER" id="PTHR28677:SF4">
    <property type="entry name" value="DOLICHYL-DIPHOSPHOOLIGOSACCHARIDE--PROTEIN GLYCOSYLTRANSFERASE SUBUNIT 4B-RELATED"/>
    <property type="match status" value="1"/>
</dbReference>
<dbReference type="Pfam" id="PF10215">
    <property type="entry name" value="Ost4"/>
    <property type="match status" value="1"/>
</dbReference>
<dbReference type="SUPFAM" id="SSF103464">
    <property type="entry name" value="Oligosaccharyltransferase subunit ost4p"/>
    <property type="match status" value="1"/>
</dbReference>
<organism>
    <name type="scientific">Oryza sativa subsp. japonica</name>
    <name type="common">Rice</name>
    <dbReference type="NCBI Taxonomy" id="39947"/>
    <lineage>
        <taxon>Eukaryota</taxon>
        <taxon>Viridiplantae</taxon>
        <taxon>Streptophyta</taxon>
        <taxon>Embryophyta</taxon>
        <taxon>Tracheophyta</taxon>
        <taxon>Spermatophyta</taxon>
        <taxon>Magnoliopsida</taxon>
        <taxon>Liliopsida</taxon>
        <taxon>Poales</taxon>
        <taxon>Poaceae</taxon>
        <taxon>BOP clade</taxon>
        <taxon>Oryzoideae</taxon>
        <taxon>Oryzeae</taxon>
        <taxon>Oryzinae</taxon>
        <taxon>Oryza</taxon>
        <taxon>Oryza sativa</taxon>
    </lineage>
</organism>
<protein>
    <recommendedName>
        <fullName>Dolichyl-diphosphooligosaccharide--protein glycosyltransferase subunit 4B</fullName>
    </recommendedName>
</protein>
<name>OST4B_ORYSJ</name>
<sequence length="37" mass="4326">MFDDQDLGFFANFLGIFIFVLVMAYHFVMADVKYEGN</sequence>
<keyword id="KW-0256">Endoplasmic reticulum</keyword>
<keyword id="KW-0472">Membrane</keyword>
<keyword id="KW-1185">Reference proteome</keyword>
<keyword id="KW-0735">Signal-anchor</keyword>
<keyword id="KW-0812">Transmembrane</keyword>
<keyword id="KW-1133">Transmembrane helix</keyword>
<feature type="chain" id="PRO_0000420822" description="Dolichyl-diphosphooligosaccharide--protein glycosyltransferase subunit 4B">
    <location>
        <begin position="1"/>
        <end position="37"/>
    </location>
</feature>
<feature type="topological domain" description="Lumenal" evidence="3">
    <location>
        <begin position="1"/>
        <end position="8"/>
    </location>
</feature>
<feature type="transmembrane region" description="Helical" evidence="3">
    <location>
        <begin position="9"/>
        <end position="29"/>
    </location>
</feature>
<feature type="topological domain" description="Cytoplasmic" evidence="3">
    <location>
        <begin position="30"/>
        <end position="37"/>
    </location>
</feature>
<accession>C7J0R5</accession>
<proteinExistence type="inferred from homology"/>